<dbReference type="EC" id="4.1.1.49" evidence="1"/>
<dbReference type="EMBL" id="AE016879">
    <property type="protein sequence ID" value="AAP28699.1"/>
    <property type="molecule type" value="Genomic_DNA"/>
</dbReference>
<dbReference type="EMBL" id="AE017334">
    <property type="protein sequence ID" value="AAT34145.1"/>
    <property type="molecule type" value="Genomic_DNA"/>
</dbReference>
<dbReference type="EMBL" id="AE017225">
    <property type="protein sequence ID" value="AAT56955.1"/>
    <property type="molecule type" value="Genomic_DNA"/>
</dbReference>
<dbReference type="RefSeq" id="NP_847213.1">
    <property type="nucleotide sequence ID" value="NC_003997.3"/>
</dbReference>
<dbReference type="RefSeq" id="WP_000108800.1">
    <property type="nucleotide sequence ID" value="NZ_WXXJ01000026.1"/>
</dbReference>
<dbReference type="RefSeq" id="YP_030905.1">
    <property type="nucleotide sequence ID" value="NC_005945.1"/>
</dbReference>
<dbReference type="SMR" id="Q81KH8"/>
<dbReference type="STRING" id="261594.GBAA_5019"/>
<dbReference type="DNASU" id="1084280"/>
<dbReference type="GeneID" id="45024634"/>
<dbReference type="KEGG" id="ban:BA_5019"/>
<dbReference type="KEGG" id="bar:GBAA_5019"/>
<dbReference type="KEGG" id="bat:BAS4661"/>
<dbReference type="PATRIC" id="fig|198094.11.peg.4981"/>
<dbReference type="eggNOG" id="COG1866">
    <property type="taxonomic scope" value="Bacteria"/>
</dbReference>
<dbReference type="HOGENOM" id="CLU_018247_0_1_9"/>
<dbReference type="OMA" id="MRYAGEM"/>
<dbReference type="OrthoDB" id="9806325at2"/>
<dbReference type="UniPathway" id="UPA00138"/>
<dbReference type="Proteomes" id="UP000000427">
    <property type="component" value="Chromosome"/>
</dbReference>
<dbReference type="Proteomes" id="UP000000594">
    <property type="component" value="Chromosome"/>
</dbReference>
<dbReference type="GO" id="GO:0005829">
    <property type="term" value="C:cytosol"/>
    <property type="evidence" value="ECO:0007669"/>
    <property type="project" value="TreeGrafter"/>
</dbReference>
<dbReference type="GO" id="GO:0005524">
    <property type="term" value="F:ATP binding"/>
    <property type="evidence" value="ECO:0007669"/>
    <property type="project" value="UniProtKB-UniRule"/>
</dbReference>
<dbReference type="GO" id="GO:0046872">
    <property type="term" value="F:metal ion binding"/>
    <property type="evidence" value="ECO:0007669"/>
    <property type="project" value="UniProtKB-KW"/>
</dbReference>
<dbReference type="GO" id="GO:0004612">
    <property type="term" value="F:phosphoenolpyruvate carboxykinase (ATP) activity"/>
    <property type="evidence" value="ECO:0007669"/>
    <property type="project" value="UniProtKB-UniRule"/>
</dbReference>
<dbReference type="GO" id="GO:0006094">
    <property type="term" value="P:gluconeogenesis"/>
    <property type="evidence" value="ECO:0007669"/>
    <property type="project" value="UniProtKB-UniRule"/>
</dbReference>
<dbReference type="CDD" id="cd00484">
    <property type="entry name" value="PEPCK_ATP"/>
    <property type="match status" value="1"/>
</dbReference>
<dbReference type="FunFam" id="2.170.8.10:FF:000001">
    <property type="entry name" value="Phosphoenolpyruvate carboxykinase (ATP)"/>
    <property type="match status" value="1"/>
</dbReference>
<dbReference type="FunFam" id="3.40.449.10:FF:000001">
    <property type="entry name" value="Phosphoenolpyruvate carboxykinase (ATP)"/>
    <property type="match status" value="1"/>
</dbReference>
<dbReference type="Gene3D" id="3.90.228.20">
    <property type="match status" value="1"/>
</dbReference>
<dbReference type="Gene3D" id="3.40.449.10">
    <property type="entry name" value="Phosphoenolpyruvate Carboxykinase, domain 1"/>
    <property type="match status" value="1"/>
</dbReference>
<dbReference type="Gene3D" id="2.170.8.10">
    <property type="entry name" value="Phosphoenolpyruvate Carboxykinase, domain 2"/>
    <property type="match status" value="1"/>
</dbReference>
<dbReference type="HAMAP" id="MF_00453">
    <property type="entry name" value="PEPCK_ATP"/>
    <property type="match status" value="1"/>
</dbReference>
<dbReference type="InterPro" id="IPR001272">
    <property type="entry name" value="PEP_carboxykinase_ATP"/>
</dbReference>
<dbReference type="InterPro" id="IPR013035">
    <property type="entry name" value="PEP_carboxykinase_C"/>
</dbReference>
<dbReference type="InterPro" id="IPR008210">
    <property type="entry name" value="PEP_carboxykinase_N"/>
</dbReference>
<dbReference type="InterPro" id="IPR015994">
    <property type="entry name" value="PEPCK_ATP_CS"/>
</dbReference>
<dbReference type="NCBIfam" id="TIGR00224">
    <property type="entry name" value="pckA"/>
    <property type="match status" value="1"/>
</dbReference>
<dbReference type="NCBIfam" id="NF006820">
    <property type="entry name" value="PRK09344.1-2"/>
    <property type="match status" value="1"/>
</dbReference>
<dbReference type="NCBIfam" id="NF006821">
    <property type="entry name" value="PRK09344.1-3"/>
    <property type="match status" value="1"/>
</dbReference>
<dbReference type="PANTHER" id="PTHR30031:SF0">
    <property type="entry name" value="PHOSPHOENOLPYRUVATE CARBOXYKINASE (ATP)"/>
    <property type="match status" value="1"/>
</dbReference>
<dbReference type="PANTHER" id="PTHR30031">
    <property type="entry name" value="PHOSPHOENOLPYRUVATE CARBOXYKINASE ATP"/>
    <property type="match status" value="1"/>
</dbReference>
<dbReference type="Pfam" id="PF01293">
    <property type="entry name" value="PEPCK_ATP"/>
    <property type="match status" value="1"/>
</dbReference>
<dbReference type="PIRSF" id="PIRSF006294">
    <property type="entry name" value="PEP_crbxkin"/>
    <property type="match status" value="1"/>
</dbReference>
<dbReference type="SUPFAM" id="SSF68923">
    <property type="entry name" value="PEP carboxykinase N-terminal domain"/>
    <property type="match status" value="1"/>
</dbReference>
<dbReference type="SUPFAM" id="SSF53795">
    <property type="entry name" value="PEP carboxykinase-like"/>
    <property type="match status" value="1"/>
</dbReference>
<dbReference type="PROSITE" id="PS00532">
    <property type="entry name" value="PEPCK_ATP"/>
    <property type="match status" value="1"/>
</dbReference>
<sequence length="528" mass="57966">MSTVNVQIGLHELLNGSNAQIQLSVPQLVEKVLMRNEGKLTSTGAVSASTGKYTGRSPKDKFIVKEASVADKIAWGAVNQPISEEHFNKLYTKVLEYLKEKEELFVFKGFAGADRNYRLPIQVINEYAWHNLFVHQLFIRPTEEELTTHESEFTIVSAPNFKADPAVDGTNSEAFIMVSFEKRIVLIGGTEYAGEMKKSIFSIMNFLLPEQDILSMHCSANVGEEGDVALFFGLSGTGKTTLSADPNRKLIGDDEHGWSDNGVFNIEGGCYAKCVNLSHEKEPQIFDAITFGSVLENVIINDQTRIADYNDTTLTENTRAAYPMHAIDNIILPSVAGHPNTIIFLTADASGVLPPISKLSKEQAMYHFLSGYTSKLAGTERGVTSPQATFSTCFGSPFLPLDASRYAEMLGEKIEKHDAKVFLVNTGWTGGEYGVGKRMNLGYTRAMIQAALNGELAKTETAKHDIFGLEVPLHVPGVPDEVLMPEQTWADKAAYKAKAIELANEFKANFKKFDSVSEDIINLGGPIA</sequence>
<keyword id="KW-0067">ATP-binding</keyword>
<keyword id="KW-0963">Cytoplasm</keyword>
<keyword id="KW-0210">Decarboxylase</keyword>
<keyword id="KW-0312">Gluconeogenesis</keyword>
<keyword id="KW-0456">Lyase</keyword>
<keyword id="KW-0464">Manganese</keyword>
<keyword id="KW-0479">Metal-binding</keyword>
<keyword id="KW-0547">Nucleotide-binding</keyword>
<keyword id="KW-1185">Reference proteome</keyword>
<feature type="chain" id="PRO_0000203802" description="Phosphoenolpyruvate carboxykinase (ATP)">
    <location>
        <begin position="1"/>
        <end position="528"/>
    </location>
</feature>
<feature type="binding site" evidence="1">
    <location>
        <position position="56"/>
    </location>
    <ligand>
        <name>substrate</name>
    </ligand>
</feature>
<feature type="binding site" evidence="1">
    <location>
        <position position="192"/>
    </location>
    <ligand>
        <name>substrate</name>
    </ligand>
</feature>
<feature type="binding site" evidence="1">
    <location>
        <position position="198"/>
    </location>
    <ligand>
        <name>ATP</name>
        <dbReference type="ChEBI" id="CHEBI:30616"/>
    </ligand>
</feature>
<feature type="binding site" evidence="1">
    <location>
        <position position="198"/>
    </location>
    <ligand>
        <name>Mn(2+)</name>
        <dbReference type="ChEBI" id="CHEBI:29035"/>
    </ligand>
</feature>
<feature type="binding site" evidence="1">
    <location>
        <position position="198"/>
    </location>
    <ligand>
        <name>substrate</name>
    </ligand>
</feature>
<feature type="binding site" evidence="1">
    <location>
        <position position="217"/>
    </location>
    <ligand>
        <name>ATP</name>
        <dbReference type="ChEBI" id="CHEBI:30616"/>
    </ligand>
</feature>
<feature type="binding site" evidence="1">
    <location>
        <position position="217"/>
    </location>
    <ligand>
        <name>Mn(2+)</name>
        <dbReference type="ChEBI" id="CHEBI:29035"/>
    </ligand>
</feature>
<feature type="binding site" evidence="1">
    <location>
        <begin position="233"/>
        <end position="241"/>
    </location>
    <ligand>
        <name>ATP</name>
        <dbReference type="ChEBI" id="CHEBI:30616"/>
    </ligand>
</feature>
<feature type="binding site" evidence="1">
    <location>
        <position position="254"/>
    </location>
    <ligand>
        <name>Mn(2+)</name>
        <dbReference type="ChEBI" id="CHEBI:29035"/>
    </ligand>
</feature>
<feature type="binding site" evidence="1">
    <location>
        <position position="282"/>
    </location>
    <ligand>
        <name>ATP</name>
        <dbReference type="ChEBI" id="CHEBI:30616"/>
    </ligand>
</feature>
<feature type="binding site" evidence="1">
    <location>
        <position position="319"/>
    </location>
    <ligand>
        <name>ATP</name>
        <dbReference type="ChEBI" id="CHEBI:30616"/>
    </ligand>
</feature>
<feature type="binding site" evidence="1">
    <location>
        <position position="319"/>
    </location>
    <ligand>
        <name>substrate</name>
    </ligand>
</feature>
<feature type="binding site" evidence="1">
    <location>
        <position position="444"/>
    </location>
    <ligand>
        <name>ATP</name>
        <dbReference type="ChEBI" id="CHEBI:30616"/>
    </ligand>
</feature>
<proteinExistence type="inferred from homology"/>
<comment type="function">
    <text evidence="1">Involved in the gluconeogenesis. Catalyzes the conversion of oxaloacetate (OAA) to phosphoenolpyruvate (PEP) through direct phosphoryl transfer between the nucleoside triphosphate and OAA.</text>
</comment>
<comment type="catalytic activity">
    <reaction evidence="1">
        <text>oxaloacetate + ATP = phosphoenolpyruvate + ADP + CO2</text>
        <dbReference type="Rhea" id="RHEA:18617"/>
        <dbReference type="ChEBI" id="CHEBI:16452"/>
        <dbReference type="ChEBI" id="CHEBI:16526"/>
        <dbReference type="ChEBI" id="CHEBI:30616"/>
        <dbReference type="ChEBI" id="CHEBI:58702"/>
        <dbReference type="ChEBI" id="CHEBI:456216"/>
        <dbReference type="EC" id="4.1.1.49"/>
    </reaction>
</comment>
<comment type="cofactor">
    <cofactor evidence="1">
        <name>Mn(2+)</name>
        <dbReference type="ChEBI" id="CHEBI:29035"/>
    </cofactor>
    <text evidence="1">Binds 1 Mn(2+) ion per subunit.</text>
</comment>
<comment type="pathway">
    <text evidence="1">Carbohydrate biosynthesis; gluconeogenesis.</text>
</comment>
<comment type="subcellular location">
    <subcellularLocation>
        <location evidence="1">Cytoplasm</location>
    </subcellularLocation>
</comment>
<comment type="similarity">
    <text evidence="1">Belongs to the phosphoenolpyruvate carboxykinase (ATP) family.</text>
</comment>
<evidence type="ECO:0000255" key="1">
    <source>
        <dbReference type="HAMAP-Rule" id="MF_00453"/>
    </source>
</evidence>
<accession>Q81KH8</accession>
<accession>Q6HRY3</accession>
<accession>Q6KL86</accession>
<name>PCKA_BACAN</name>
<reference key="1">
    <citation type="journal article" date="2003" name="Nature">
        <title>The genome sequence of Bacillus anthracis Ames and comparison to closely related bacteria.</title>
        <authorList>
            <person name="Read T.D."/>
            <person name="Peterson S.N."/>
            <person name="Tourasse N.J."/>
            <person name="Baillie L.W."/>
            <person name="Paulsen I.T."/>
            <person name="Nelson K.E."/>
            <person name="Tettelin H."/>
            <person name="Fouts D.E."/>
            <person name="Eisen J.A."/>
            <person name="Gill S.R."/>
            <person name="Holtzapple E.K."/>
            <person name="Okstad O.A."/>
            <person name="Helgason E."/>
            <person name="Rilstone J."/>
            <person name="Wu M."/>
            <person name="Kolonay J.F."/>
            <person name="Beanan M.J."/>
            <person name="Dodson R.J."/>
            <person name="Brinkac L.M."/>
            <person name="Gwinn M.L."/>
            <person name="DeBoy R.T."/>
            <person name="Madpu R."/>
            <person name="Daugherty S.C."/>
            <person name="Durkin A.S."/>
            <person name="Haft D.H."/>
            <person name="Nelson W.C."/>
            <person name="Peterson J.D."/>
            <person name="Pop M."/>
            <person name="Khouri H.M."/>
            <person name="Radune D."/>
            <person name="Benton J.L."/>
            <person name="Mahamoud Y."/>
            <person name="Jiang L."/>
            <person name="Hance I.R."/>
            <person name="Weidman J.F."/>
            <person name="Berry K.J."/>
            <person name="Plaut R.D."/>
            <person name="Wolf A.M."/>
            <person name="Watkins K.L."/>
            <person name="Nierman W.C."/>
            <person name="Hazen A."/>
            <person name="Cline R.T."/>
            <person name="Redmond C."/>
            <person name="Thwaite J.E."/>
            <person name="White O."/>
            <person name="Salzberg S.L."/>
            <person name="Thomason B."/>
            <person name="Friedlander A.M."/>
            <person name="Koehler T.M."/>
            <person name="Hanna P.C."/>
            <person name="Kolstoe A.-B."/>
            <person name="Fraser C.M."/>
        </authorList>
    </citation>
    <scope>NUCLEOTIDE SEQUENCE [LARGE SCALE GENOMIC DNA]</scope>
    <source>
        <strain>Ames / isolate Porton</strain>
    </source>
</reference>
<reference key="2">
    <citation type="journal article" date="2009" name="J. Bacteriol.">
        <title>The complete genome sequence of Bacillus anthracis Ames 'Ancestor'.</title>
        <authorList>
            <person name="Ravel J."/>
            <person name="Jiang L."/>
            <person name="Stanley S.T."/>
            <person name="Wilson M.R."/>
            <person name="Decker R.S."/>
            <person name="Read T.D."/>
            <person name="Worsham P."/>
            <person name="Keim P.S."/>
            <person name="Salzberg S.L."/>
            <person name="Fraser-Liggett C.M."/>
            <person name="Rasko D.A."/>
        </authorList>
    </citation>
    <scope>NUCLEOTIDE SEQUENCE [LARGE SCALE GENOMIC DNA]</scope>
    <source>
        <strain>Ames ancestor</strain>
    </source>
</reference>
<reference key="3">
    <citation type="submission" date="2004-01" db="EMBL/GenBank/DDBJ databases">
        <title>Complete genome sequence of Bacillus anthracis Sterne.</title>
        <authorList>
            <person name="Brettin T.S."/>
            <person name="Bruce D."/>
            <person name="Challacombe J.F."/>
            <person name="Gilna P."/>
            <person name="Han C."/>
            <person name="Hill K."/>
            <person name="Hitchcock P."/>
            <person name="Jackson P."/>
            <person name="Keim P."/>
            <person name="Longmire J."/>
            <person name="Lucas S."/>
            <person name="Okinaka R."/>
            <person name="Richardson P."/>
            <person name="Rubin E."/>
            <person name="Tice H."/>
        </authorList>
    </citation>
    <scope>NUCLEOTIDE SEQUENCE [LARGE SCALE GENOMIC DNA]</scope>
    <source>
        <strain>Sterne</strain>
    </source>
</reference>
<protein>
    <recommendedName>
        <fullName evidence="1">Phosphoenolpyruvate carboxykinase (ATP)</fullName>
        <shortName evidence="1">PCK</shortName>
        <shortName evidence="1">PEP carboxykinase</shortName>
        <shortName evidence="1">PEPCK</shortName>
        <ecNumber evidence="1">4.1.1.49</ecNumber>
    </recommendedName>
</protein>
<organism>
    <name type="scientific">Bacillus anthracis</name>
    <dbReference type="NCBI Taxonomy" id="1392"/>
    <lineage>
        <taxon>Bacteria</taxon>
        <taxon>Bacillati</taxon>
        <taxon>Bacillota</taxon>
        <taxon>Bacilli</taxon>
        <taxon>Bacillales</taxon>
        <taxon>Bacillaceae</taxon>
        <taxon>Bacillus</taxon>
        <taxon>Bacillus cereus group</taxon>
    </lineage>
</organism>
<gene>
    <name evidence="1" type="primary">pckA</name>
    <name type="ordered locus">BA_5019</name>
    <name type="ordered locus">GBAA_5019</name>
    <name type="ordered locus">BAS4661</name>
</gene>